<name>Y1290_LEPCP</name>
<accession>B1Y654</accession>
<organism>
    <name type="scientific">Leptothrix cholodnii (strain ATCC 51168 / LMG 8142 / SP-6)</name>
    <name type="common">Leptothrix discophora (strain SP-6)</name>
    <dbReference type="NCBI Taxonomy" id="395495"/>
    <lineage>
        <taxon>Bacteria</taxon>
        <taxon>Pseudomonadati</taxon>
        <taxon>Pseudomonadota</taxon>
        <taxon>Betaproteobacteria</taxon>
        <taxon>Burkholderiales</taxon>
        <taxon>Sphaerotilaceae</taxon>
        <taxon>Leptothrix</taxon>
    </lineage>
</organism>
<evidence type="ECO:0000255" key="1">
    <source>
        <dbReference type="HAMAP-Rule" id="MF_01204"/>
    </source>
</evidence>
<keyword id="KW-0285">Flavoprotein</keyword>
<keyword id="KW-0288">FMN</keyword>
<keyword id="KW-0520">NAD</keyword>
<keyword id="KW-0521">NADP</keyword>
<keyword id="KW-0560">Oxidoreductase</keyword>
<keyword id="KW-1185">Reference proteome</keyword>
<sequence>MTHALDTLALNQLFTEARTHNAWRDEPVAPELLRQLHELAKWGPTAMNCCPLRVRFIVGAEARARLLPLMSEGNRAKTAAAPVIAILGRDVDFHQHMPTLAPHMAGARERFADQPAQREAMSQLNGALEAGYFILAARALGLDCGPMGGFDAAAVDAEFWAGTAVRSMIVCNLGHGDPAGLRPRAPRLDFDTACAVL</sequence>
<gene>
    <name type="ordered locus">Lcho_1290</name>
</gene>
<reference key="1">
    <citation type="submission" date="2008-03" db="EMBL/GenBank/DDBJ databases">
        <title>Complete sequence of Leptothrix cholodnii SP-6.</title>
        <authorList>
            <consortium name="US DOE Joint Genome Institute"/>
            <person name="Copeland A."/>
            <person name="Lucas S."/>
            <person name="Lapidus A."/>
            <person name="Glavina del Rio T."/>
            <person name="Dalin E."/>
            <person name="Tice H."/>
            <person name="Bruce D."/>
            <person name="Goodwin L."/>
            <person name="Pitluck S."/>
            <person name="Chertkov O."/>
            <person name="Brettin T."/>
            <person name="Detter J.C."/>
            <person name="Han C."/>
            <person name="Kuske C.R."/>
            <person name="Schmutz J."/>
            <person name="Larimer F."/>
            <person name="Land M."/>
            <person name="Hauser L."/>
            <person name="Kyrpides N."/>
            <person name="Lykidis A."/>
            <person name="Emerson D."/>
            <person name="Richardson P."/>
        </authorList>
    </citation>
    <scope>NUCLEOTIDE SEQUENCE [LARGE SCALE GENOMIC DNA]</scope>
    <source>
        <strain>ATCC 51168 / LMG 8142 / SP-6</strain>
    </source>
</reference>
<feature type="chain" id="PRO_1000138698" description="Putative NADH dehydrogenase/NAD(P)H nitroreductase Lcho_1290">
    <location>
        <begin position="1"/>
        <end position="197"/>
    </location>
</feature>
<comment type="cofactor">
    <cofactor evidence="1">
        <name>FMN</name>
        <dbReference type="ChEBI" id="CHEBI:58210"/>
    </cofactor>
</comment>
<comment type="similarity">
    <text evidence="1">Belongs to the nitroreductase family. HadB/RutE subfamily.</text>
</comment>
<protein>
    <recommendedName>
        <fullName evidence="1">Putative NADH dehydrogenase/NAD(P)H nitroreductase Lcho_1290</fullName>
        <ecNumber evidence="1">1.-.-.-</ecNumber>
    </recommendedName>
</protein>
<proteinExistence type="inferred from homology"/>
<dbReference type="EC" id="1.-.-.-" evidence="1"/>
<dbReference type="EMBL" id="CP001013">
    <property type="protein sequence ID" value="ACB33559.1"/>
    <property type="molecule type" value="Genomic_DNA"/>
</dbReference>
<dbReference type="RefSeq" id="WP_012346321.1">
    <property type="nucleotide sequence ID" value="NC_010524.1"/>
</dbReference>
<dbReference type="SMR" id="B1Y654"/>
<dbReference type="STRING" id="395495.Lcho_1290"/>
<dbReference type="KEGG" id="lch:Lcho_1290"/>
<dbReference type="eggNOG" id="COG0778">
    <property type="taxonomic scope" value="Bacteria"/>
</dbReference>
<dbReference type="HOGENOM" id="CLU_084441_0_0_4"/>
<dbReference type="OrthoDB" id="9784375at2"/>
<dbReference type="Proteomes" id="UP000001693">
    <property type="component" value="Chromosome"/>
</dbReference>
<dbReference type="GO" id="GO:0016491">
    <property type="term" value="F:oxidoreductase activity"/>
    <property type="evidence" value="ECO:0007669"/>
    <property type="project" value="UniProtKB-UniRule"/>
</dbReference>
<dbReference type="CDD" id="cd02148">
    <property type="entry name" value="RutE-like"/>
    <property type="match status" value="1"/>
</dbReference>
<dbReference type="Gene3D" id="3.40.109.10">
    <property type="entry name" value="NADH Oxidase"/>
    <property type="match status" value="1"/>
</dbReference>
<dbReference type="HAMAP" id="MF_01204">
    <property type="entry name" value="Oxidoreductase_RutE_HadB"/>
    <property type="match status" value="1"/>
</dbReference>
<dbReference type="InterPro" id="IPR029479">
    <property type="entry name" value="Nitroreductase"/>
</dbReference>
<dbReference type="InterPro" id="IPR000415">
    <property type="entry name" value="Nitroreductase-like"/>
</dbReference>
<dbReference type="InterPro" id="IPR050461">
    <property type="entry name" value="Nitroreductase_HadB/RutE"/>
</dbReference>
<dbReference type="InterPro" id="IPR023936">
    <property type="entry name" value="RutE-like"/>
</dbReference>
<dbReference type="NCBIfam" id="NF003768">
    <property type="entry name" value="PRK05365.1"/>
    <property type="match status" value="1"/>
</dbReference>
<dbReference type="PANTHER" id="PTHR43543">
    <property type="entry name" value="MALONIC SEMIALDEHYDE REDUCTASE RUTE-RELATED"/>
    <property type="match status" value="1"/>
</dbReference>
<dbReference type="PANTHER" id="PTHR43543:SF1">
    <property type="entry name" value="MALONIC SEMIALDEHYDE REDUCTASE RUTE-RELATED"/>
    <property type="match status" value="1"/>
</dbReference>
<dbReference type="Pfam" id="PF00881">
    <property type="entry name" value="Nitroreductase"/>
    <property type="match status" value="1"/>
</dbReference>
<dbReference type="SUPFAM" id="SSF55469">
    <property type="entry name" value="FMN-dependent nitroreductase-like"/>
    <property type="match status" value="1"/>
</dbReference>